<organism>
    <name type="scientific">Bos taurus</name>
    <name type="common">Bovine</name>
    <dbReference type="NCBI Taxonomy" id="9913"/>
    <lineage>
        <taxon>Eukaryota</taxon>
        <taxon>Metazoa</taxon>
        <taxon>Chordata</taxon>
        <taxon>Craniata</taxon>
        <taxon>Vertebrata</taxon>
        <taxon>Euteleostomi</taxon>
        <taxon>Mammalia</taxon>
        <taxon>Eutheria</taxon>
        <taxon>Laurasiatheria</taxon>
        <taxon>Artiodactyla</taxon>
        <taxon>Ruminantia</taxon>
        <taxon>Pecora</taxon>
        <taxon>Bovidae</taxon>
        <taxon>Bovinae</taxon>
        <taxon>Bos</taxon>
    </lineage>
</organism>
<gene>
    <name type="primary">AGFG1</name>
    <name type="synonym">HRB</name>
    <name type="synonym">RIP</name>
</gene>
<dbReference type="EMBL" id="BC111120">
    <property type="protein sequence ID" value="AAI11121.1"/>
    <property type="molecule type" value="mRNA"/>
</dbReference>
<dbReference type="RefSeq" id="NP_001033260.1">
    <property type="nucleotide sequence ID" value="NM_001038171.2"/>
</dbReference>
<dbReference type="FunCoup" id="Q2TA45">
    <property type="interactions" value="1710"/>
</dbReference>
<dbReference type="STRING" id="9913.ENSBTAP00000070272"/>
<dbReference type="GlyCosmos" id="Q2TA45">
    <property type="glycosylation" value="1 site, No reported glycans"/>
</dbReference>
<dbReference type="GlyGen" id="Q2TA45">
    <property type="glycosylation" value="1 site"/>
</dbReference>
<dbReference type="iPTMnet" id="Q2TA45"/>
<dbReference type="PaxDb" id="9913-ENSBTAP00000028427"/>
<dbReference type="PeptideAtlas" id="Q2TA45"/>
<dbReference type="GeneID" id="536149"/>
<dbReference type="KEGG" id="bta:536149"/>
<dbReference type="CTD" id="3267"/>
<dbReference type="eggNOG" id="KOG0702">
    <property type="taxonomic scope" value="Eukaryota"/>
</dbReference>
<dbReference type="HOGENOM" id="CLU_027801_1_0_1"/>
<dbReference type="InParanoid" id="Q2TA45"/>
<dbReference type="OrthoDB" id="6036at2759"/>
<dbReference type="TreeFam" id="TF325357"/>
<dbReference type="Proteomes" id="UP000009136">
    <property type="component" value="Unplaced"/>
</dbReference>
<dbReference type="GO" id="GO:0005737">
    <property type="term" value="C:cytoplasm"/>
    <property type="evidence" value="ECO:0000318"/>
    <property type="project" value="GO_Central"/>
</dbReference>
<dbReference type="GO" id="GO:0031410">
    <property type="term" value="C:cytoplasmic vesicle"/>
    <property type="evidence" value="ECO:0000318"/>
    <property type="project" value="GO_Central"/>
</dbReference>
<dbReference type="GO" id="GO:0005634">
    <property type="term" value="C:nucleus"/>
    <property type="evidence" value="ECO:0007669"/>
    <property type="project" value="UniProtKB-SubCell"/>
</dbReference>
<dbReference type="GO" id="GO:0003677">
    <property type="term" value="F:DNA binding"/>
    <property type="evidence" value="ECO:0007669"/>
    <property type="project" value="UniProtKB-KW"/>
</dbReference>
<dbReference type="GO" id="GO:0005096">
    <property type="term" value="F:GTPase activator activity"/>
    <property type="evidence" value="ECO:0007669"/>
    <property type="project" value="InterPro"/>
</dbReference>
<dbReference type="GO" id="GO:0008270">
    <property type="term" value="F:zinc ion binding"/>
    <property type="evidence" value="ECO:0007669"/>
    <property type="project" value="UniProtKB-KW"/>
</dbReference>
<dbReference type="GO" id="GO:0001675">
    <property type="term" value="P:acrosome assembly"/>
    <property type="evidence" value="ECO:0000318"/>
    <property type="project" value="GO_Central"/>
</dbReference>
<dbReference type="GO" id="GO:0045109">
    <property type="term" value="P:intermediate filament organization"/>
    <property type="evidence" value="ECO:0000318"/>
    <property type="project" value="GO_Central"/>
</dbReference>
<dbReference type="GO" id="GO:0007289">
    <property type="term" value="P:spermatid nucleus differentiation"/>
    <property type="evidence" value="ECO:0000318"/>
    <property type="project" value="GO_Central"/>
</dbReference>
<dbReference type="CDD" id="cd08857">
    <property type="entry name" value="ArfGap_AGFG1"/>
    <property type="match status" value="1"/>
</dbReference>
<dbReference type="FunFam" id="1.10.220.150:FF:000005">
    <property type="entry name" value="Arf-GAP domain and FG repeat-containing protein 1"/>
    <property type="match status" value="1"/>
</dbReference>
<dbReference type="FunFam" id="3.30.450.50:FF:000005">
    <property type="entry name" value="arf-GAP domain and FG repeat-containing protein 1"/>
    <property type="match status" value="1"/>
</dbReference>
<dbReference type="Gene3D" id="1.10.220.150">
    <property type="entry name" value="Arf GTPase activating protein"/>
    <property type="match status" value="1"/>
</dbReference>
<dbReference type="Gene3D" id="3.30.450.50">
    <property type="entry name" value="Longin domain"/>
    <property type="match status" value="1"/>
</dbReference>
<dbReference type="InterPro" id="IPR052248">
    <property type="entry name" value="Arf-GAP_FG-repeat_protein"/>
</dbReference>
<dbReference type="InterPro" id="IPR037278">
    <property type="entry name" value="ARFGAP/RecO"/>
</dbReference>
<dbReference type="InterPro" id="IPR001164">
    <property type="entry name" value="ArfGAP_dom"/>
</dbReference>
<dbReference type="InterPro" id="IPR038508">
    <property type="entry name" value="ArfGAP_dom_sf"/>
</dbReference>
<dbReference type="PANTHER" id="PTHR46134:SF1">
    <property type="entry name" value="ARF-GAP DOMAIN AND FG REPEAT-CONTAINING PROTEIN 1"/>
    <property type="match status" value="1"/>
</dbReference>
<dbReference type="PANTHER" id="PTHR46134">
    <property type="entry name" value="DRONGO, ISOFORM F"/>
    <property type="match status" value="1"/>
</dbReference>
<dbReference type="Pfam" id="PF01412">
    <property type="entry name" value="ArfGap"/>
    <property type="match status" value="1"/>
</dbReference>
<dbReference type="PRINTS" id="PR00405">
    <property type="entry name" value="REVINTRACTNG"/>
</dbReference>
<dbReference type="SMART" id="SM00105">
    <property type="entry name" value="ArfGap"/>
    <property type="match status" value="1"/>
</dbReference>
<dbReference type="SUPFAM" id="SSF57863">
    <property type="entry name" value="ArfGap/RecO-like zinc finger"/>
    <property type="match status" value="1"/>
</dbReference>
<dbReference type="PROSITE" id="PS50115">
    <property type="entry name" value="ARFGAP"/>
    <property type="match status" value="1"/>
</dbReference>
<evidence type="ECO:0000250" key="1"/>
<evidence type="ECO:0000250" key="2">
    <source>
        <dbReference type="UniProtKB" id="P52594"/>
    </source>
</evidence>
<evidence type="ECO:0000255" key="3">
    <source>
        <dbReference type="PROSITE-ProRule" id="PRU00288"/>
    </source>
</evidence>
<evidence type="ECO:0000256" key="4">
    <source>
        <dbReference type="SAM" id="MobiDB-lite"/>
    </source>
</evidence>
<proteinExistence type="evidence at transcript level"/>
<accession>Q2TA45</accession>
<keyword id="KW-0968">Cytoplasmic vesicle</keyword>
<keyword id="KW-0217">Developmental protein</keyword>
<keyword id="KW-0221">Differentiation</keyword>
<keyword id="KW-0238">DNA-binding</keyword>
<keyword id="KW-0325">Glycoprotein</keyword>
<keyword id="KW-0479">Metal-binding</keyword>
<keyword id="KW-0539">Nucleus</keyword>
<keyword id="KW-0597">Phosphoprotein</keyword>
<keyword id="KW-1185">Reference proteome</keyword>
<keyword id="KW-0677">Repeat</keyword>
<keyword id="KW-0744">Spermatogenesis</keyword>
<keyword id="KW-0813">Transport</keyword>
<keyword id="KW-0862">Zinc</keyword>
<keyword id="KW-0863">Zinc-finger</keyword>
<protein>
    <recommendedName>
        <fullName>Arf-GAP domain and FG repeat-containing protein 1</fullName>
    </recommendedName>
    <alternativeName>
        <fullName>HIV-1 Rev-binding protein homolog</fullName>
    </alternativeName>
    <alternativeName>
        <fullName>Nucleoporin-like protein RIP</fullName>
    </alternativeName>
</protein>
<name>AGFG1_BOVIN</name>
<feature type="chain" id="PRO_0000227907" description="Arf-GAP domain and FG repeat-containing protein 1">
    <location>
        <begin position="1"/>
        <end position="562"/>
    </location>
</feature>
<feature type="domain" description="Arf-GAP" evidence="3">
    <location>
        <begin position="11"/>
        <end position="135"/>
    </location>
</feature>
<feature type="zinc finger region" description="C4-type" evidence="3">
    <location>
        <begin position="29"/>
        <end position="52"/>
    </location>
</feature>
<feature type="region of interest" description="Disordered" evidence="4">
    <location>
        <begin position="168"/>
        <end position="194"/>
    </location>
</feature>
<feature type="compositionally biased region" description="Polar residues" evidence="4">
    <location>
        <begin position="176"/>
        <end position="191"/>
    </location>
</feature>
<feature type="modified residue" description="Phosphoserine" evidence="2">
    <location>
        <position position="167"/>
    </location>
</feature>
<feature type="modified residue" description="Phosphothreonine" evidence="2">
    <location>
        <position position="177"/>
    </location>
</feature>
<feature type="modified residue" description="Phosphoserine" evidence="2">
    <location>
        <position position="181"/>
    </location>
</feature>
<feature type="modified residue" description="Phosphoserine" evidence="2">
    <location>
        <position position="362"/>
    </location>
</feature>
<feature type="glycosylation site" description="O-linked (GlcNAc) serine" evidence="1">
    <location>
        <position position="367"/>
    </location>
</feature>
<reference key="1">
    <citation type="submission" date="2005-12" db="EMBL/GenBank/DDBJ databases">
        <authorList>
            <consortium name="NIH - Mammalian Gene Collection (MGC) project"/>
        </authorList>
    </citation>
    <scope>NUCLEOTIDE SEQUENCE [LARGE SCALE MRNA]</scope>
    <source>
        <strain>Hereford</strain>
        <tissue>Rumen reticulum</tissue>
    </source>
</reference>
<comment type="function">
    <text evidence="1">Required for vesicle docking or fusion during acrosome biogenesis. May play a role in RNA trafficking or localization (By similarity).</text>
</comment>
<comment type="subunit">
    <text evidence="1">Interacts with EPS15R and EPS15. Interacts with FCHO1 (By similarity).</text>
</comment>
<comment type="subcellular location">
    <subcellularLocation>
        <location evidence="2">Nucleus</location>
    </subcellularLocation>
    <subcellularLocation>
        <location evidence="2">Cytoplasmic vesicle</location>
    </subcellularLocation>
</comment>
<comment type="domain">
    <text>Contains FG repeats.</text>
</comment>
<comment type="PTM">
    <text evidence="1">O-glycosylated.</text>
</comment>
<sequence length="562" mass="58134">MAASAKRKQEEKHLKMLRDMTGLPHNRKCFDCDQRGPTYVNMTVGSFVCTSCSGSLRGLNPPHRVKSISMTTFTQQEIEFLQKHGNEVCKQIWLGLFDDRSSAIPDFRDPQKVKEFLQEKYEKKRWYVPPEQAKVVASVHASISGSSASSTSSTPEVKPLKSLLGDSAPALHLNKGTPSQSPVVGRSQAQQQEKKQFDLLSDLGSDIFAAPAPQSTATANFANFAHFNSHAAQNSANADFANFDAFGQSSGSSNFGGFPTASHSSFQPQTTGGSAGSVNANFAHFDNFPKSSSADFGTFNTSQSHQTASAVSKVSANKAGLQTTDKYAALANLDNIFSAGQGGDQGSGFGTTGKAPVGSVVSVPSQSSASSDKYAALAELDSVFSSAATSSNAYTSTSNASSNVFGTVPVGASAQTQPASSSVPAPFGATPSTNPFVAAAGPSVASSTNPFQTNARGATAATFGTASMSMPAGFGTPAPYSLPTSFSGSFQQPAFPAQAAFPQQTAFSQQPNGAGFAAFGQTKPVVTPFGQVGAAGVSSNPFMTGAPTGQFPTGSSSTNPFL</sequence>